<name>RUVB_ALIF1</name>
<proteinExistence type="inferred from homology"/>
<comment type="function">
    <text evidence="1">The RuvA-RuvB-RuvC complex processes Holliday junction (HJ) DNA during genetic recombination and DNA repair, while the RuvA-RuvB complex plays an important role in the rescue of blocked DNA replication forks via replication fork reversal (RFR). RuvA specifically binds to HJ cruciform DNA, conferring on it an open structure. The RuvB hexamer acts as an ATP-dependent pump, pulling dsDNA into and through the RuvAB complex. RuvB forms 2 homohexamers on either side of HJ DNA bound by 1 or 2 RuvA tetramers; 4 subunits per hexamer contact DNA at a time. Coordinated motions by a converter formed by DNA-disengaged RuvB subunits stimulates ATP hydrolysis and nucleotide exchange. Immobilization of the converter enables RuvB to convert the ATP-contained energy into a lever motion, pulling 2 nucleotides of DNA out of the RuvA tetramer per ATP hydrolyzed, thus driving DNA branch migration. The RuvB motors rotate together with the DNA substrate, which together with the progressing nucleotide cycle form the mechanistic basis for DNA recombination by continuous HJ branch migration. Branch migration allows RuvC to scan DNA until it finds its consensus sequence, where it cleaves and resolves cruciform DNA.</text>
</comment>
<comment type="catalytic activity">
    <reaction evidence="1">
        <text>ATP + H2O = ADP + phosphate + H(+)</text>
        <dbReference type="Rhea" id="RHEA:13065"/>
        <dbReference type="ChEBI" id="CHEBI:15377"/>
        <dbReference type="ChEBI" id="CHEBI:15378"/>
        <dbReference type="ChEBI" id="CHEBI:30616"/>
        <dbReference type="ChEBI" id="CHEBI:43474"/>
        <dbReference type="ChEBI" id="CHEBI:456216"/>
    </reaction>
</comment>
<comment type="subunit">
    <text evidence="1">Homohexamer. Forms an RuvA(8)-RuvB(12)-Holliday junction (HJ) complex. HJ DNA is sandwiched between 2 RuvA tetramers; dsDNA enters through RuvA and exits via RuvB. An RuvB hexamer assembles on each DNA strand where it exits the tetramer. Each RuvB hexamer is contacted by two RuvA subunits (via domain III) on 2 adjacent RuvB subunits; this complex drives branch migration. In the full resolvosome a probable DNA-RuvA(4)-RuvB(12)-RuvC(2) complex forms which resolves the HJ.</text>
</comment>
<comment type="subcellular location">
    <subcellularLocation>
        <location evidence="1">Cytoplasm</location>
    </subcellularLocation>
</comment>
<comment type="domain">
    <text evidence="1">Has 3 domains, the large (RuvB-L) and small ATPase (RuvB-S) domains and the C-terminal head (RuvB-H) domain. The head domain binds DNA, while the ATPase domains jointly bind ATP, ADP or are empty depending on the state of the subunit in the translocation cycle. During a single DNA translocation step the structure of each domain remains the same, but their relative positions change.</text>
</comment>
<comment type="similarity">
    <text evidence="1">Belongs to the RuvB family.</text>
</comment>
<sequence>MIEADRLIAADNPTFREEDVIDRAIRPKKLDDYQGQDHVRSQMEIFIKAAQMREEALDHLLIFGPPGLGKTTLANIVANEMGVNIRTTSGPVLEKAGDLAALLTNLEENDILFIDEIHRLSPMVEEVLYPAMEDYQLDIMIGEGPAARSIKIDLPPFTLIGATTRAGSLTSPLRDRFGIVQRLEYYKVEDLQHIVQRSADCLNLSMESEGALEVARRARGTPRIANRLLRRVRDYAEVMSDGNISSEIADKALNMLDVDVRGFDYMDRKLLLAIMEKFDGGPVGLDNIAAAIGEERDTIEDVIEPYLIQQGYLQRTPRGRIVSDRAYLHFGIDKPDK</sequence>
<gene>
    <name evidence="1" type="primary">ruvB</name>
    <name type="ordered locus">VF_0952</name>
</gene>
<dbReference type="EC" id="3.6.4.-" evidence="1"/>
<dbReference type="EMBL" id="CP000020">
    <property type="protein sequence ID" value="AAW85447.1"/>
    <property type="molecule type" value="Genomic_DNA"/>
</dbReference>
<dbReference type="RefSeq" id="WP_011261596.1">
    <property type="nucleotide sequence ID" value="NC_006840.2"/>
</dbReference>
<dbReference type="RefSeq" id="YP_204335.1">
    <property type="nucleotide sequence ID" value="NC_006840.2"/>
</dbReference>
<dbReference type="SMR" id="Q5E699"/>
<dbReference type="STRING" id="312309.VF_0952"/>
<dbReference type="EnsemblBacteria" id="AAW85447">
    <property type="protein sequence ID" value="AAW85447"/>
    <property type="gene ID" value="VF_0952"/>
</dbReference>
<dbReference type="GeneID" id="54163622"/>
<dbReference type="KEGG" id="vfi:VF_0952"/>
<dbReference type="PATRIC" id="fig|312309.11.peg.950"/>
<dbReference type="eggNOG" id="COG2255">
    <property type="taxonomic scope" value="Bacteria"/>
</dbReference>
<dbReference type="HOGENOM" id="CLU_055599_1_0_6"/>
<dbReference type="OrthoDB" id="9804478at2"/>
<dbReference type="Proteomes" id="UP000000537">
    <property type="component" value="Chromosome I"/>
</dbReference>
<dbReference type="GO" id="GO:0005737">
    <property type="term" value="C:cytoplasm"/>
    <property type="evidence" value="ECO:0007669"/>
    <property type="project" value="UniProtKB-SubCell"/>
</dbReference>
<dbReference type="GO" id="GO:0048476">
    <property type="term" value="C:Holliday junction resolvase complex"/>
    <property type="evidence" value="ECO:0007669"/>
    <property type="project" value="UniProtKB-UniRule"/>
</dbReference>
<dbReference type="GO" id="GO:0005524">
    <property type="term" value="F:ATP binding"/>
    <property type="evidence" value="ECO:0007669"/>
    <property type="project" value="UniProtKB-UniRule"/>
</dbReference>
<dbReference type="GO" id="GO:0016887">
    <property type="term" value="F:ATP hydrolysis activity"/>
    <property type="evidence" value="ECO:0007669"/>
    <property type="project" value="InterPro"/>
</dbReference>
<dbReference type="GO" id="GO:0000400">
    <property type="term" value="F:four-way junction DNA binding"/>
    <property type="evidence" value="ECO:0007669"/>
    <property type="project" value="UniProtKB-UniRule"/>
</dbReference>
<dbReference type="GO" id="GO:0009378">
    <property type="term" value="F:four-way junction helicase activity"/>
    <property type="evidence" value="ECO:0007669"/>
    <property type="project" value="InterPro"/>
</dbReference>
<dbReference type="GO" id="GO:0006310">
    <property type="term" value="P:DNA recombination"/>
    <property type="evidence" value="ECO:0007669"/>
    <property type="project" value="UniProtKB-UniRule"/>
</dbReference>
<dbReference type="GO" id="GO:0006281">
    <property type="term" value="P:DNA repair"/>
    <property type="evidence" value="ECO:0007669"/>
    <property type="project" value="UniProtKB-UniRule"/>
</dbReference>
<dbReference type="CDD" id="cd00009">
    <property type="entry name" value="AAA"/>
    <property type="match status" value="1"/>
</dbReference>
<dbReference type="FunFam" id="1.10.10.10:FF:000086">
    <property type="entry name" value="Holliday junction ATP-dependent DNA helicase RuvB"/>
    <property type="match status" value="1"/>
</dbReference>
<dbReference type="FunFam" id="1.10.8.60:FF:000023">
    <property type="entry name" value="Holliday junction ATP-dependent DNA helicase RuvB"/>
    <property type="match status" value="1"/>
</dbReference>
<dbReference type="FunFam" id="3.40.50.300:FF:000073">
    <property type="entry name" value="Holliday junction ATP-dependent DNA helicase RuvB"/>
    <property type="match status" value="1"/>
</dbReference>
<dbReference type="Gene3D" id="1.10.8.60">
    <property type="match status" value="1"/>
</dbReference>
<dbReference type="Gene3D" id="3.40.50.300">
    <property type="entry name" value="P-loop containing nucleotide triphosphate hydrolases"/>
    <property type="match status" value="1"/>
</dbReference>
<dbReference type="Gene3D" id="1.10.10.10">
    <property type="entry name" value="Winged helix-like DNA-binding domain superfamily/Winged helix DNA-binding domain"/>
    <property type="match status" value="1"/>
</dbReference>
<dbReference type="HAMAP" id="MF_00016">
    <property type="entry name" value="DNA_HJ_migration_RuvB"/>
    <property type="match status" value="1"/>
</dbReference>
<dbReference type="InterPro" id="IPR003593">
    <property type="entry name" value="AAA+_ATPase"/>
</dbReference>
<dbReference type="InterPro" id="IPR041445">
    <property type="entry name" value="AAA_lid_4"/>
</dbReference>
<dbReference type="InterPro" id="IPR004605">
    <property type="entry name" value="DNA_helicase_Holl-junc_RuvB"/>
</dbReference>
<dbReference type="InterPro" id="IPR027417">
    <property type="entry name" value="P-loop_NTPase"/>
</dbReference>
<dbReference type="InterPro" id="IPR008824">
    <property type="entry name" value="RuvB-like_N"/>
</dbReference>
<dbReference type="InterPro" id="IPR008823">
    <property type="entry name" value="RuvB_C"/>
</dbReference>
<dbReference type="InterPro" id="IPR036388">
    <property type="entry name" value="WH-like_DNA-bd_sf"/>
</dbReference>
<dbReference type="InterPro" id="IPR036390">
    <property type="entry name" value="WH_DNA-bd_sf"/>
</dbReference>
<dbReference type="NCBIfam" id="NF000868">
    <property type="entry name" value="PRK00080.1"/>
    <property type="match status" value="1"/>
</dbReference>
<dbReference type="NCBIfam" id="TIGR00635">
    <property type="entry name" value="ruvB"/>
    <property type="match status" value="1"/>
</dbReference>
<dbReference type="PANTHER" id="PTHR42848">
    <property type="match status" value="1"/>
</dbReference>
<dbReference type="PANTHER" id="PTHR42848:SF1">
    <property type="entry name" value="HOLLIDAY JUNCTION BRANCH MIGRATION COMPLEX SUBUNIT RUVB"/>
    <property type="match status" value="1"/>
</dbReference>
<dbReference type="Pfam" id="PF17864">
    <property type="entry name" value="AAA_lid_4"/>
    <property type="match status" value="1"/>
</dbReference>
<dbReference type="Pfam" id="PF05491">
    <property type="entry name" value="RuvB_C"/>
    <property type="match status" value="1"/>
</dbReference>
<dbReference type="Pfam" id="PF05496">
    <property type="entry name" value="RuvB_N"/>
    <property type="match status" value="1"/>
</dbReference>
<dbReference type="SMART" id="SM00382">
    <property type="entry name" value="AAA"/>
    <property type="match status" value="1"/>
</dbReference>
<dbReference type="SUPFAM" id="SSF52540">
    <property type="entry name" value="P-loop containing nucleoside triphosphate hydrolases"/>
    <property type="match status" value="1"/>
</dbReference>
<dbReference type="SUPFAM" id="SSF46785">
    <property type="entry name" value="Winged helix' DNA-binding domain"/>
    <property type="match status" value="1"/>
</dbReference>
<keyword id="KW-0067">ATP-binding</keyword>
<keyword id="KW-0963">Cytoplasm</keyword>
<keyword id="KW-0227">DNA damage</keyword>
<keyword id="KW-0233">DNA recombination</keyword>
<keyword id="KW-0234">DNA repair</keyword>
<keyword id="KW-0238">DNA-binding</keyword>
<keyword id="KW-0378">Hydrolase</keyword>
<keyword id="KW-0547">Nucleotide-binding</keyword>
<keyword id="KW-1185">Reference proteome</keyword>
<organism>
    <name type="scientific">Aliivibrio fischeri (strain ATCC 700601 / ES114)</name>
    <name type="common">Vibrio fischeri</name>
    <dbReference type="NCBI Taxonomy" id="312309"/>
    <lineage>
        <taxon>Bacteria</taxon>
        <taxon>Pseudomonadati</taxon>
        <taxon>Pseudomonadota</taxon>
        <taxon>Gammaproteobacteria</taxon>
        <taxon>Vibrionales</taxon>
        <taxon>Vibrionaceae</taxon>
        <taxon>Aliivibrio</taxon>
    </lineage>
</organism>
<evidence type="ECO:0000255" key="1">
    <source>
        <dbReference type="HAMAP-Rule" id="MF_00016"/>
    </source>
</evidence>
<feature type="chain" id="PRO_0000165628" description="Holliday junction branch migration complex subunit RuvB">
    <location>
        <begin position="1"/>
        <end position="337"/>
    </location>
</feature>
<feature type="region of interest" description="Large ATPase domain (RuvB-L)" evidence="1">
    <location>
        <begin position="4"/>
        <end position="186"/>
    </location>
</feature>
<feature type="region of interest" description="Small ATPAse domain (RuvB-S)" evidence="1">
    <location>
        <begin position="187"/>
        <end position="257"/>
    </location>
</feature>
<feature type="region of interest" description="Head domain (RuvB-H)" evidence="1">
    <location>
        <begin position="260"/>
        <end position="337"/>
    </location>
</feature>
<feature type="binding site" evidence="1">
    <location>
        <position position="25"/>
    </location>
    <ligand>
        <name>ATP</name>
        <dbReference type="ChEBI" id="CHEBI:30616"/>
    </ligand>
</feature>
<feature type="binding site" evidence="1">
    <location>
        <position position="26"/>
    </location>
    <ligand>
        <name>ATP</name>
        <dbReference type="ChEBI" id="CHEBI:30616"/>
    </ligand>
</feature>
<feature type="binding site" evidence="1">
    <location>
        <position position="67"/>
    </location>
    <ligand>
        <name>ATP</name>
        <dbReference type="ChEBI" id="CHEBI:30616"/>
    </ligand>
</feature>
<feature type="binding site" evidence="1">
    <location>
        <position position="70"/>
    </location>
    <ligand>
        <name>ATP</name>
        <dbReference type="ChEBI" id="CHEBI:30616"/>
    </ligand>
</feature>
<feature type="binding site" evidence="1">
    <location>
        <position position="71"/>
    </location>
    <ligand>
        <name>ATP</name>
        <dbReference type="ChEBI" id="CHEBI:30616"/>
    </ligand>
</feature>
<feature type="binding site" evidence="1">
    <location>
        <position position="71"/>
    </location>
    <ligand>
        <name>Mg(2+)</name>
        <dbReference type="ChEBI" id="CHEBI:18420"/>
    </ligand>
</feature>
<feature type="binding site" evidence="1">
    <location>
        <position position="72"/>
    </location>
    <ligand>
        <name>ATP</name>
        <dbReference type="ChEBI" id="CHEBI:30616"/>
    </ligand>
</feature>
<feature type="binding site" evidence="1">
    <location>
        <begin position="133"/>
        <end position="135"/>
    </location>
    <ligand>
        <name>ATP</name>
        <dbReference type="ChEBI" id="CHEBI:30616"/>
    </ligand>
</feature>
<feature type="binding site" evidence="1">
    <location>
        <position position="176"/>
    </location>
    <ligand>
        <name>ATP</name>
        <dbReference type="ChEBI" id="CHEBI:30616"/>
    </ligand>
</feature>
<feature type="binding site" evidence="1">
    <location>
        <position position="186"/>
    </location>
    <ligand>
        <name>ATP</name>
        <dbReference type="ChEBI" id="CHEBI:30616"/>
    </ligand>
</feature>
<feature type="binding site" evidence="1">
    <location>
        <position position="223"/>
    </location>
    <ligand>
        <name>ATP</name>
        <dbReference type="ChEBI" id="CHEBI:30616"/>
    </ligand>
</feature>
<feature type="binding site" evidence="1">
    <location>
        <position position="296"/>
    </location>
    <ligand>
        <name>DNA</name>
        <dbReference type="ChEBI" id="CHEBI:16991"/>
    </ligand>
</feature>
<feature type="binding site" evidence="1">
    <location>
        <position position="315"/>
    </location>
    <ligand>
        <name>DNA</name>
        <dbReference type="ChEBI" id="CHEBI:16991"/>
    </ligand>
</feature>
<feature type="binding site" evidence="1">
    <location>
        <position position="320"/>
    </location>
    <ligand>
        <name>DNA</name>
        <dbReference type="ChEBI" id="CHEBI:16991"/>
    </ligand>
</feature>
<accession>Q5E699</accession>
<reference key="1">
    <citation type="journal article" date="2005" name="Proc. Natl. Acad. Sci. U.S.A.">
        <title>Complete genome sequence of Vibrio fischeri: a symbiotic bacterium with pathogenic congeners.</title>
        <authorList>
            <person name="Ruby E.G."/>
            <person name="Urbanowski M."/>
            <person name="Campbell J."/>
            <person name="Dunn A."/>
            <person name="Faini M."/>
            <person name="Gunsalus R."/>
            <person name="Lostroh P."/>
            <person name="Lupp C."/>
            <person name="McCann J."/>
            <person name="Millikan D."/>
            <person name="Schaefer A."/>
            <person name="Stabb E."/>
            <person name="Stevens A."/>
            <person name="Visick K."/>
            <person name="Whistler C."/>
            <person name="Greenberg E.P."/>
        </authorList>
    </citation>
    <scope>NUCLEOTIDE SEQUENCE [LARGE SCALE GENOMIC DNA]</scope>
    <source>
        <strain>ATCC 700601 / ES114</strain>
    </source>
</reference>
<protein>
    <recommendedName>
        <fullName evidence="1">Holliday junction branch migration complex subunit RuvB</fullName>
        <ecNumber evidence="1">3.6.4.-</ecNumber>
    </recommendedName>
</protein>